<dbReference type="EC" id="4.2.1.33" evidence="9"/>
<dbReference type="EC" id="4.2.1.170" evidence="2"/>
<dbReference type="EMBL" id="AC004450">
    <property type="protein sequence ID" value="AAC64299.1"/>
    <property type="molecule type" value="Genomic_DNA"/>
</dbReference>
<dbReference type="EMBL" id="AC006224">
    <property type="protein sequence ID" value="AAM15160.1"/>
    <property type="molecule type" value="Genomic_DNA"/>
</dbReference>
<dbReference type="EMBL" id="CP002685">
    <property type="protein sequence ID" value="AEC10209.1"/>
    <property type="molecule type" value="Genomic_DNA"/>
</dbReference>
<dbReference type="EMBL" id="AY060594">
    <property type="protein sequence ID" value="AAL31219.1"/>
    <property type="molecule type" value="mRNA"/>
</dbReference>
<dbReference type="EMBL" id="AY063828">
    <property type="protein sequence ID" value="AAL36184.1"/>
    <property type="molecule type" value="mRNA"/>
</dbReference>
<dbReference type="EMBL" id="AY117208">
    <property type="protein sequence ID" value="AAM51283.1"/>
    <property type="molecule type" value="mRNA"/>
</dbReference>
<dbReference type="PIR" id="A84862">
    <property type="entry name" value="A84862"/>
</dbReference>
<dbReference type="RefSeq" id="NP_181838.1">
    <property type="nucleotide sequence ID" value="NM_129871.3"/>
</dbReference>
<dbReference type="SMR" id="Q9ZW84"/>
<dbReference type="FunCoup" id="Q9ZW84">
    <property type="interactions" value="79"/>
</dbReference>
<dbReference type="STRING" id="3702.Q9ZW84"/>
<dbReference type="iPTMnet" id="Q9ZW84"/>
<dbReference type="PaxDb" id="3702-AT2G43100.1"/>
<dbReference type="ProteomicsDB" id="250755"/>
<dbReference type="EnsemblPlants" id="AT2G43100.1">
    <property type="protein sequence ID" value="AT2G43100.1"/>
    <property type="gene ID" value="AT2G43100"/>
</dbReference>
<dbReference type="GeneID" id="818912"/>
<dbReference type="Gramene" id="AT2G43100.1">
    <property type="protein sequence ID" value="AT2G43100.1"/>
    <property type="gene ID" value="AT2G43100"/>
</dbReference>
<dbReference type="KEGG" id="ath:AT2G43100"/>
<dbReference type="Araport" id="AT2G43100"/>
<dbReference type="TAIR" id="AT2G43100">
    <property type="gene designation" value="IPMI2"/>
</dbReference>
<dbReference type="eggNOG" id="KOG0454">
    <property type="taxonomic scope" value="Eukaryota"/>
</dbReference>
<dbReference type="HOGENOM" id="CLU_081378_1_0_1"/>
<dbReference type="InParanoid" id="Q9ZW84"/>
<dbReference type="OMA" id="FAYARMM"/>
<dbReference type="OrthoDB" id="10262323at2759"/>
<dbReference type="PhylomeDB" id="Q9ZW84"/>
<dbReference type="BioCyc" id="ARA:AT2G43100-MONOMER"/>
<dbReference type="BioCyc" id="MetaCyc:AT2G43100-MONOMER"/>
<dbReference type="BRENDA" id="4.2.1.33">
    <property type="organism ID" value="399"/>
</dbReference>
<dbReference type="UniPathway" id="UPA00048">
    <property type="reaction ID" value="UER00071"/>
</dbReference>
<dbReference type="PRO" id="PR:Q9ZW84"/>
<dbReference type="Proteomes" id="UP000006548">
    <property type="component" value="Chromosome 2"/>
</dbReference>
<dbReference type="ExpressionAtlas" id="Q9ZW84">
    <property type="expression patterns" value="baseline and differential"/>
</dbReference>
<dbReference type="GO" id="GO:0009570">
    <property type="term" value="C:chloroplast stroma"/>
    <property type="evidence" value="ECO:0000314"/>
    <property type="project" value="UniProtKB"/>
</dbReference>
<dbReference type="GO" id="GO:0009536">
    <property type="term" value="C:plastid"/>
    <property type="evidence" value="ECO:0000314"/>
    <property type="project" value="TAIR"/>
</dbReference>
<dbReference type="GO" id="GO:0120528">
    <property type="term" value="F:2-(omega-methylthio)alkylmalate dehydratase activity"/>
    <property type="evidence" value="ECO:0007669"/>
    <property type="project" value="UniProtKB-EC"/>
</dbReference>
<dbReference type="GO" id="GO:0003861">
    <property type="term" value="F:3-isopropylmalate dehydratase activity"/>
    <property type="evidence" value="ECO:0000314"/>
    <property type="project" value="UniProtKB"/>
</dbReference>
<dbReference type="GO" id="GO:0019761">
    <property type="term" value="P:glucosinolate biosynthetic process"/>
    <property type="evidence" value="ECO:0000315"/>
    <property type="project" value="UniProtKB"/>
</dbReference>
<dbReference type="GO" id="GO:0009098">
    <property type="term" value="P:L-leucine biosynthetic process"/>
    <property type="evidence" value="ECO:0007669"/>
    <property type="project" value="UniProtKB-UniPathway"/>
</dbReference>
<dbReference type="CDD" id="cd01577">
    <property type="entry name" value="IPMI_Swivel"/>
    <property type="match status" value="1"/>
</dbReference>
<dbReference type="FunFam" id="3.20.19.10:FF:000007">
    <property type="entry name" value="Isopropylmalate/citramalate isomerase small subunit"/>
    <property type="match status" value="1"/>
</dbReference>
<dbReference type="Gene3D" id="3.20.19.10">
    <property type="entry name" value="Aconitase, domain 4"/>
    <property type="match status" value="1"/>
</dbReference>
<dbReference type="InterPro" id="IPR015928">
    <property type="entry name" value="Aconitase/3IPM_dehydase_swvl"/>
</dbReference>
<dbReference type="InterPro" id="IPR000573">
    <property type="entry name" value="AconitaseA/IPMdHydase_ssu_swvl"/>
</dbReference>
<dbReference type="InterPro" id="IPR033940">
    <property type="entry name" value="IPMI_Swivel"/>
</dbReference>
<dbReference type="InterPro" id="IPR050075">
    <property type="entry name" value="LeuD"/>
</dbReference>
<dbReference type="PANTHER" id="PTHR43345:SF7">
    <property type="entry name" value="3-ISOPROPYLMALATE DEHYDRATASE SMALL SUBUNIT 2"/>
    <property type="match status" value="1"/>
</dbReference>
<dbReference type="PANTHER" id="PTHR43345">
    <property type="entry name" value="3-ISOPROPYLMALATE DEHYDRATASE SMALL SUBUNIT 2-RELATED-RELATED"/>
    <property type="match status" value="1"/>
</dbReference>
<dbReference type="Pfam" id="PF00694">
    <property type="entry name" value="Aconitase_C"/>
    <property type="match status" value="1"/>
</dbReference>
<dbReference type="SUPFAM" id="SSF52016">
    <property type="entry name" value="LeuD/IlvD-like"/>
    <property type="match status" value="1"/>
</dbReference>
<sequence>MAYSLPTFPQALPCSSTKTSSSLATFRSPFLRFNGSTSLIPSSISITSRGTSSPTIIPRAAASESDSNEALANTTFHGLCYVLKDNIDTDQIIPAGAACTFPSNQQERDEIAAHALSGLPDFHKTRFIEPGENRSKYSIIIGGENFGCGSSREHAPVCLGAAGAKAIVAESYARIFFRNSVATGEVFPLESEVRVCEECKTGDTVTIELSDSGGLLTNHTTGKNYKLKSIGDAGPVIDAGGIFAYARMMGMIPSLA</sequence>
<reference key="1">
    <citation type="journal article" date="1999" name="Nature">
        <title>Sequence and analysis of chromosome 2 of the plant Arabidopsis thaliana.</title>
        <authorList>
            <person name="Lin X."/>
            <person name="Kaul S."/>
            <person name="Rounsley S.D."/>
            <person name="Shea T.P."/>
            <person name="Benito M.-I."/>
            <person name="Town C.D."/>
            <person name="Fujii C.Y."/>
            <person name="Mason T.M."/>
            <person name="Bowman C.L."/>
            <person name="Barnstead M.E."/>
            <person name="Feldblyum T.V."/>
            <person name="Buell C.R."/>
            <person name="Ketchum K.A."/>
            <person name="Lee J.J."/>
            <person name="Ronning C.M."/>
            <person name="Koo H.L."/>
            <person name="Moffat K.S."/>
            <person name="Cronin L.A."/>
            <person name="Shen M."/>
            <person name="Pai G."/>
            <person name="Van Aken S."/>
            <person name="Umayam L."/>
            <person name="Tallon L.J."/>
            <person name="Gill J.E."/>
            <person name="Adams M.D."/>
            <person name="Carrera A.J."/>
            <person name="Creasy T.H."/>
            <person name="Goodman H.M."/>
            <person name="Somerville C.R."/>
            <person name="Copenhaver G.P."/>
            <person name="Preuss D."/>
            <person name="Nierman W.C."/>
            <person name="White O."/>
            <person name="Eisen J.A."/>
            <person name="Salzberg S.L."/>
            <person name="Fraser C.M."/>
            <person name="Venter J.C."/>
        </authorList>
    </citation>
    <scope>NUCLEOTIDE SEQUENCE [LARGE SCALE GENOMIC DNA]</scope>
    <source>
        <strain>cv. Columbia</strain>
    </source>
</reference>
<reference key="2">
    <citation type="journal article" date="2017" name="Plant J.">
        <title>Araport11: a complete reannotation of the Arabidopsis thaliana reference genome.</title>
        <authorList>
            <person name="Cheng C.Y."/>
            <person name="Krishnakumar V."/>
            <person name="Chan A.P."/>
            <person name="Thibaud-Nissen F."/>
            <person name="Schobel S."/>
            <person name="Town C.D."/>
        </authorList>
    </citation>
    <scope>GENOME REANNOTATION</scope>
    <source>
        <strain>cv. Columbia</strain>
    </source>
</reference>
<reference key="3">
    <citation type="journal article" date="2003" name="Science">
        <title>Empirical analysis of transcriptional activity in the Arabidopsis genome.</title>
        <authorList>
            <person name="Yamada K."/>
            <person name="Lim J."/>
            <person name="Dale J.M."/>
            <person name="Chen H."/>
            <person name="Shinn P."/>
            <person name="Palm C.J."/>
            <person name="Southwick A.M."/>
            <person name="Wu H.C."/>
            <person name="Kim C.J."/>
            <person name="Nguyen M."/>
            <person name="Pham P.K."/>
            <person name="Cheuk R.F."/>
            <person name="Karlin-Newmann G."/>
            <person name="Liu S.X."/>
            <person name="Lam B."/>
            <person name="Sakano H."/>
            <person name="Wu T."/>
            <person name="Yu G."/>
            <person name="Miranda M."/>
            <person name="Quach H.L."/>
            <person name="Tripp M."/>
            <person name="Chang C.H."/>
            <person name="Lee J.M."/>
            <person name="Toriumi M.J."/>
            <person name="Chan M.M."/>
            <person name="Tang C.C."/>
            <person name="Onodera C.S."/>
            <person name="Deng J.M."/>
            <person name="Akiyama K."/>
            <person name="Ansari Y."/>
            <person name="Arakawa T."/>
            <person name="Banh J."/>
            <person name="Banno F."/>
            <person name="Bowser L."/>
            <person name="Brooks S.Y."/>
            <person name="Carninci P."/>
            <person name="Chao Q."/>
            <person name="Choy N."/>
            <person name="Enju A."/>
            <person name="Goldsmith A.D."/>
            <person name="Gurjal M."/>
            <person name="Hansen N.F."/>
            <person name="Hayashizaki Y."/>
            <person name="Johnson-Hopson C."/>
            <person name="Hsuan V.W."/>
            <person name="Iida K."/>
            <person name="Karnes M."/>
            <person name="Khan S."/>
            <person name="Koesema E."/>
            <person name="Ishida J."/>
            <person name="Jiang P.X."/>
            <person name="Jones T."/>
            <person name="Kawai J."/>
            <person name="Kamiya A."/>
            <person name="Meyers C."/>
            <person name="Nakajima M."/>
            <person name="Narusaka M."/>
            <person name="Seki M."/>
            <person name="Sakurai T."/>
            <person name="Satou M."/>
            <person name="Tamse R."/>
            <person name="Vaysberg M."/>
            <person name="Wallender E.K."/>
            <person name="Wong C."/>
            <person name="Yamamura Y."/>
            <person name="Yuan S."/>
            <person name="Shinozaki K."/>
            <person name="Davis R.W."/>
            <person name="Theologis A."/>
            <person name="Ecker J.R."/>
        </authorList>
    </citation>
    <scope>NUCLEOTIDE SEQUENCE [LARGE SCALE MRNA]</scope>
    <source>
        <strain>cv. Columbia</strain>
    </source>
</reference>
<reference key="4">
    <citation type="journal article" date="2009" name="Plant Mol. Biol.">
        <title>Arabidopsis thaliana encodes a bacterial-type heterodimeric isopropylmalate isomerase involved in both Leu biosynthesis and the Met chain elongation pathway of glucosinolate formation.</title>
        <authorList>
            <person name="Knill T."/>
            <person name="Reichelt M."/>
            <person name="Paetz C."/>
            <person name="Gershenzon J."/>
            <person name="Binder S."/>
        </authorList>
    </citation>
    <scope>FUNCTION</scope>
    <scope>CATALYTIC ACTIVITY</scope>
    <scope>SUBCELLULAR LOCATION</scope>
    <scope>DISRUPTION PHENOTYPE</scope>
</reference>
<reference key="5">
    <citation type="journal article" date="2010" name="Plant Cell Physiol.">
        <title>Functional specification of Arabidopsis isopropylmalate isomerases in glucosinolate and leucine biosynthesis.</title>
        <authorList>
            <person name="He Y."/>
            <person name="Chen B."/>
            <person name="Pang Q."/>
            <person name="Strul J.M."/>
            <person name="Chen S."/>
        </authorList>
    </citation>
    <scope>FUNCTION</scope>
    <scope>SUBUNIT</scope>
    <scope>SUBCELLULAR LOCATION</scope>
    <scope>TISSUE SPECIFICITY</scope>
</reference>
<reference key="6">
    <citation type="journal article" date="2014" name="PLoS ONE">
        <title>The small subunit 1 of the Arabidopsis isopropylmalate isomerase is required for normal growth and development and the early stages of glucosinolate formation.</title>
        <authorList>
            <person name="Imhof J."/>
            <person name="Huber F."/>
            <person name="Reichelt M."/>
            <person name="Gershenzon J."/>
            <person name="Wiegreffe C."/>
            <person name="Laechler K."/>
            <person name="Binder S."/>
        </authorList>
    </citation>
    <scope>TISSUE SPECIFICITY</scope>
</reference>
<reference key="7">
    <citation type="journal article" date="2020" name="Front. Plant Sci.">
        <title>In Arabidopsis thaliana substrate recognition and tissue- as well as plastid type-specific expression define the roles of distinct small subunits of isopropylmalate isomerase.</title>
        <authorList>
            <person name="Laechler K."/>
            <person name="Clauss K."/>
            <person name="Imhof J."/>
            <person name="Crocoll C."/>
            <person name="Schulz A."/>
            <person name="Halkier B.A."/>
            <person name="Binder S."/>
        </authorList>
    </citation>
    <scope>FUNCTION</scope>
    <scope>SUBCELLULAR LOCATION</scope>
    <scope>TISSUE SPECIFICITY</scope>
</reference>
<evidence type="ECO:0000255" key="1"/>
<evidence type="ECO:0000269" key="2">
    <source>
    </source>
</evidence>
<evidence type="ECO:0000269" key="3">
    <source>
    </source>
</evidence>
<evidence type="ECO:0000269" key="4">
    <source>
    </source>
</evidence>
<evidence type="ECO:0000269" key="5">
    <source>
    </source>
</evidence>
<evidence type="ECO:0000303" key="6">
    <source>
    </source>
</evidence>
<evidence type="ECO:0000303" key="7">
    <source>
    </source>
</evidence>
<evidence type="ECO:0000305" key="8"/>
<evidence type="ECO:0000305" key="9">
    <source>
    </source>
</evidence>
<evidence type="ECO:0000305" key="10">
    <source>
    </source>
</evidence>
<evidence type="ECO:0000312" key="11">
    <source>
        <dbReference type="Araport" id="AT2G43100"/>
    </source>
</evidence>
<gene>
    <name evidence="6" type="primary">SSU2</name>
    <name evidence="8" type="synonym">IPMI2</name>
    <name evidence="7" type="synonym">LEUD1</name>
    <name evidence="11" type="ordered locus">At2g43100</name>
    <name type="ORF">MFL8.14</name>
</gene>
<organism>
    <name type="scientific">Arabidopsis thaliana</name>
    <name type="common">Mouse-ear cress</name>
    <dbReference type="NCBI Taxonomy" id="3702"/>
    <lineage>
        <taxon>Eukaryota</taxon>
        <taxon>Viridiplantae</taxon>
        <taxon>Streptophyta</taxon>
        <taxon>Embryophyta</taxon>
        <taxon>Tracheophyta</taxon>
        <taxon>Spermatophyta</taxon>
        <taxon>Magnoliopsida</taxon>
        <taxon>eudicotyledons</taxon>
        <taxon>Gunneridae</taxon>
        <taxon>Pentapetalae</taxon>
        <taxon>rosids</taxon>
        <taxon>malvids</taxon>
        <taxon>Brassicales</taxon>
        <taxon>Brassicaceae</taxon>
        <taxon>Camelineae</taxon>
        <taxon>Arabidopsis</taxon>
    </lineage>
</organism>
<proteinExistence type="evidence at protein level"/>
<accession>Q9ZW84</accession>
<keyword id="KW-0028">Amino-acid biosynthesis</keyword>
<keyword id="KW-0100">Branched-chain amino acid biosynthesis</keyword>
<keyword id="KW-0150">Chloroplast</keyword>
<keyword id="KW-0432">Leucine biosynthesis</keyword>
<keyword id="KW-0456">Lyase</keyword>
<keyword id="KW-0934">Plastid</keyword>
<keyword id="KW-1185">Reference proteome</keyword>
<keyword id="KW-0809">Transit peptide</keyword>
<comment type="function">
    <text evidence="2 3 5 9 10">Catalyzes the isomerization between 2-isopropylmalate and 3-isopropylmalate, via the formation of 2-isopropylmaleate (Probable). Functions redundantly with LEUD2 in the methionine chain elongation pathway of aliphatic glucosinolate formation.</text>
</comment>
<comment type="catalytic activity">
    <reaction evidence="9">
        <text>(2R,3S)-3-isopropylmalate = (2S)-2-isopropylmalate</text>
        <dbReference type="Rhea" id="RHEA:32287"/>
        <dbReference type="ChEBI" id="CHEBI:1178"/>
        <dbReference type="ChEBI" id="CHEBI:35121"/>
        <dbReference type="EC" id="4.2.1.33"/>
    </reaction>
</comment>
<comment type="catalytic activity">
    <reaction evidence="2">
        <text>a 2-(omega-methylsulfanyl)alkylmalate = a 2-(omega-methylsulfanyl)alkylmaleate + H2O</text>
        <dbReference type="Rhea" id="RHEA:50632"/>
        <dbReference type="Rhea" id="RHEA-COMP:12824"/>
        <dbReference type="Rhea" id="RHEA-COMP:12826"/>
        <dbReference type="ChEBI" id="CHEBI:15377"/>
        <dbReference type="ChEBI" id="CHEBI:133494"/>
        <dbReference type="ChEBI" id="CHEBI:133498"/>
        <dbReference type="EC" id="4.2.1.170"/>
    </reaction>
</comment>
<comment type="catalytic activity">
    <reaction evidence="2">
        <text>2-(3-methylsulfanyl)propylmalate = 2-(2-methylsulfanyl)propylmaleate + H2O</text>
        <dbReference type="Rhea" id="RHEA:50652"/>
        <dbReference type="ChEBI" id="CHEBI:15377"/>
        <dbReference type="ChEBI" id="CHEBI:58817"/>
        <dbReference type="ChEBI" id="CHEBI:133500"/>
        <dbReference type="EC" id="4.2.1.170"/>
    </reaction>
</comment>
<comment type="catalytic activity">
    <reaction evidence="2">
        <text>a 3-(omega-methylsulfanyl)alkylmalate = a 2-(omega-methylsulfanyl)alkylmaleate + H2O</text>
        <dbReference type="Rhea" id="RHEA:50636"/>
        <dbReference type="Rhea" id="RHEA-COMP:12825"/>
        <dbReference type="Rhea" id="RHEA-COMP:12826"/>
        <dbReference type="ChEBI" id="CHEBI:15377"/>
        <dbReference type="ChEBI" id="CHEBI:133496"/>
        <dbReference type="ChEBI" id="CHEBI:133498"/>
        <dbReference type="EC" id="4.2.1.170"/>
    </reaction>
</comment>
<comment type="catalytic activity">
    <reaction evidence="2">
        <text>2-(2-methylsulfanyl)ethylmalate = 2-(2-methylsulfanyl)ethylmaleate + H2O</text>
        <dbReference type="Rhea" id="RHEA:50648"/>
        <dbReference type="ChEBI" id="CHEBI:15377"/>
        <dbReference type="ChEBI" id="CHEBI:58816"/>
        <dbReference type="ChEBI" id="CHEBI:133499"/>
        <dbReference type="EC" id="4.2.1.170"/>
    </reaction>
</comment>
<comment type="catalytic activity">
    <reaction evidence="2">
        <text>3-(2-methylsulfanyl)ethylmalate = 2-(2-methylsulfanyl)ethylmaleate + H2O</text>
        <dbReference type="Rhea" id="RHEA:50656"/>
        <dbReference type="ChEBI" id="CHEBI:15377"/>
        <dbReference type="ChEBI" id="CHEBI:133497"/>
        <dbReference type="ChEBI" id="CHEBI:133499"/>
        <dbReference type="EC" id="4.2.1.170"/>
    </reaction>
</comment>
<comment type="catalytic activity">
    <reaction evidence="2">
        <text>3-(3-methylsulfanyl)propylmalate = 2-(2-methylsulfanyl)propylmaleate + H2O</text>
        <dbReference type="Rhea" id="RHEA:50660"/>
        <dbReference type="ChEBI" id="CHEBI:15377"/>
        <dbReference type="ChEBI" id="CHEBI:133500"/>
        <dbReference type="ChEBI" id="CHEBI:133501"/>
        <dbReference type="EC" id="4.2.1.170"/>
    </reaction>
</comment>
<comment type="pathway">
    <text evidence="8">Amino-acid biosynthesis; L-leucine biosynthesis; L-leucine from 3-methyl-2-oxobutanoate: step 2/4.</text>
</comment>
<comment type="subunit">
    <text evidence="3">Heterodimer of the large LEUC/IIL1 subunit and the small LEUD (SSU1, SSU2 or SSU3) subunits.</text>
</comment>
<comment type="subcellular location">
    <subcellularLocation>
        <location evidence="2 3">Plastid</location>
        <location evidence="2 3">Chloroplast stroma</location>
    </subcellularLocation>
    <subcellularLocation>
        <location evidence="5">Plastid</location>
    </subcellularLocation>
</comment>
<comment type="tissue specificity">
    <text evidence="4 5">Expressed in vascular bundles of roots, cotyledons and rosette leaves (PubMed:24608865). Expressed in stem vascular bundles which branche off into lateral inflorescences (PubMed:24608865). Expressed in connective tissues in anthers (PubMed:24608865). In young seedlings, expressed in cotyledon epidermal cells and vasculare bundles (PubMed:32612621). In hypocotyls, expressed in parenchyma cells surrounding the vasculature and further peripheral cells (PubMed:32612621). In seedling roots, expressed in cells along the vasculature (PubMed:32612621). In roots of adult plants, expressed in cells closely associated with the stele (PubMed:32612621). In flowering stalks, expressed in parenchyma cells associated with the phloem or the xylem (PubMed:32612621). Expressed in the vasculature of sepals and petals (PubMed:32612621).</text>
</comment>
<comment type="disruption phenotype">
    <text evidence="2">No visible phenotype under normal growth conditions.</text>
</comment>
<comment type="similarity">
    <text evidence="8">Belongs to the LeuD family.</text>
</comment>
<feature type="transit peptide" description="Chloroplast" evidence="1">
    <location>
        <begin position="1"/>
        <end position="59"/>
    </location>
</feature>
<feature type="chain" id="PRO_0000425810" description="3-isopropylmalate dehydratase small subunit 2">
    <location>
        <begin position="60"/>
        <end position="256"/>
    </location>
</feature>
<protein>
    <recommendedName>
        <fullName evidence="8">3-isopropylmalate dehydratase small subunit 2</fullName>
        <ecNumber evidence="9">4.2.1.33</ecNumber>
    </recommendedName>
    <alternativeName>
        <fullName evidence="8">2-(omega-methylthio)alkylmalate dehydratase small subunit 2</fullName>
        <ecNumber evidence="2">4.2.1.170</ecNumber>
    </alternativeName>
    <alternativeName>
        <fullName evidence="7">AtLEUD1</fullName>
    </alternativeName>
    <alternativeName>
        <fullName evidence="8">Isopropylmalate isomerase 2</fullName>
    </alternativeName>
    <alternativeName>
        <fullName evidence="6">Isopropylmalate isomerase small subunit 2</fullName>
        <shortName evidence="6">IPMI SSU2</shortName>
    </alternativeName>
    <alternativeName>
        <fullName evidence="8">Methylthioalkylmalate isomerase small subunit</fullName>
        <shortName evidence="8">MAM-IS</shortName>
    </alternativeName>
</protein>
<name>LEUD1_ARATH</name>